<gene>
    <name evidence="1" type="primary">hisS</name>
    <name type="ordered locus">ETA_10290</name>
</gene>
<reference key="1">
    <citation type="journal article" date="2008" name="Environ. Microbiol.">
        <title>The genome of Erwinia tasmaniensis strain Et1/99, a non-pathogenic bacterium in the genus Erwinia.</title>
        <authorList>
            <person name="Kube M."/>
            <person name="Migdoll A.M."/>
            <person name="Mueller I."/>
            <person name="Kuhl H."/>
            <person name="Beck A."/>
            <person name="Reinhardt R."/>
            <person name="Geider K."/>
        </authorList>
    </citation>
    <scope>NUCLEOTIDE SEQUENCE [LARGE SCALE GENOMIC DNA]</scope>
    <source>
        <strain>DSM 17950 / CFBP 7177 / CIP 109463 / NCPPB 4357 / Et1/99</strain>
    </source>
</reference>
<sequence>MAKNIQAIRGMNDYLPADTAVWQRVEQILKQVLSSYGFSEIRMPIVEQTPLFKRAIGEVTDVVEKEMYTFDDRNGESLTLRPEGTAGCVRAGIEHGLLYNQEQRLWYIGPMFRYERPQKGRYRQFHQIGAEVFGLQGPDIDAELIMMTARWWKALGIADHVSLELNSIGSLEARANYRNALVAFLEQHIEVLDEDCKRRMYSNPLRVLDSKNPDIQALLNDAPALGDYLDDESREHFAGLCHQLDAAGIAYRVNQRLVRGLDYYNRTVFEWVTDSLGAQGTVCAGGRYDGLVEQLGGRATPAVGFAMGLERLVLLVQAVNPEFEPMRVVDVYVIASGDGVQSAAMLLAERLRDALPELKLMTNFGGGNFKKQFARADKWGARIALVLGEDEVANKQLVIKDLRNGEQQTLAQSDAAATLAALLQL</sequence>
<keyword id="KW-0030">Aminoacyl-tRNA synthetase</keyword>
<keyword id="KW-0067">ATP-binding</keyword>
<keyword id="KW-0963">Cytoplasm</keyword>
<keyword id="KW-0436">Ligase</keyword>
<keyword id="KW-0547">Nucleotide-binding</keyword>
<keyword id="KW-0648">Protein biosynthesis</keyword>
<keyword id="KW-1185">Reference proteome</keyword>
<feature type="chain" id="PRO_1000095555" description="Histidine--tRNA ligase">
    <location>
        <begin position="1"/>
        <end position="425"/>
    </location>
</feature>
<organism>
    <name type="scientific">Erwinia tasmaniensis (strain DSM 17950 / CFBP 7177 / CIP 109463 / NCPPB 4357 / Et1/99)</name>
    <dbReference type="NCBI Taxonomy" id="465817"/>
    <lineage>
        <taxon>Bacteria</taxon>
        <taxon>Pseudomonadati</taxon>
        <taxon>Pseudomonadota</taxon>
        <taxon>Gammaproteobacteria</taxon>
        <taxon>Enterobacterales</taxon>
        <taxon>Erwiniaceae</taxon>
        <taxon>Erwinia</taxon>
    </lineage>
</organism>
<protein>
    <recommendedName>
        <fullName evidence="1">Histidine--tRNA ligase</fullName>
        <ecNumber evidence="1">6.1.1.21</ecNumber>
    </recommendedName>
    <alternativeName>
        <fullName evidence="1">Histidyl-tRNA synthetase</fullName>
        <shortName evidence="1">HisRS</shortName>
    </alternativeName>
</protein>
<accession>B2VE90</accession>
<dbReference type="EC" id="6.1.1.21" evidence="1"/>
<dbReference type="EMBL" id="CU468135">
    <property type="protein sequence ID" value="CAO96075.1"/>
    <property type="molecule type" value="Genomic_DNA"/>
</dbReference>
<dbReference type="RefSeq" id="WP_012440775.1">
    <property type="nucleotide sequence ID" value="NC_010694.1"/>
</dbReference>
<dbReference type="SMR" id="B2VE90"/>
<dbReference type="STRING" id="465817.ETA_10290"/>
<dbReference type="KEGG" id="eta:ETA_10290"/>
<dbReference type="eggNOG" id="COG0124">
    <property type="taxonomic scope" value="Bacteria"/>
</dbReference>
<dbReference type="HOGENOM" id="CLU_025113_1_1_6"/>
<dbReference type="OrthoDB" id="9800814at2"/>
<dbReference type="Proteomes" id="UP000001726">
    <property type="component" value="Chromosome"/>
</dbReference>
<dbReference type="GO" id="GO:0005737">
    <property type="term" value="C:cytoplasm"/>
    <property type="evidence" value="ECO:0007669"/>
    <property type="project" value="UniProtKB-SubCell"/>
</dbReference>
<dbReference type="GO" id="GO:0005524">
    <property type="term" value="F:ATP binding"/>
    <property type="evidence" value="ECO:0007669"/>
    <property type="project" value="UniProtKB-UniRule"/>
</dbReference>
<dbReference type="GO" id="GO:0004821">
    <property type="term" value="F:histidine-tRNA ligase activity"/>
    <property type="evidence" value="ECO:0007669"/>
    <property type="project" value="UniProtKB-UniRule"/>
</dbReference>
<dbReference type="GO" id="GO:0006427">
    <property type="term" value="P:histidyl-tRNA aminoacylation"/>
    <property type="evidence" value="ECO:0007669"/>
    <property type="project" value="UniProtKB-UniRule"/>
</dbReference>
<dbReference type="CDD" id="cd00773">
    <property type="entry name" value="HisRS-like_core"/>
    <property type="match status" value="1"/>
</dbReference>
<dbReference type="CDD" id="cd00859">
    <property type="entry name" value="HisRS_anticodon"/>
    <property type="match status" value="1"/>
</dbReference>
<dbReference type="FunFam" id="3.30.930.10:FF:000005">
    <property type="entry name" value="Histidine--tRNA ligase"/>
    <property type="match status" value="1"/>
</dbReference>
<dbReference type="FunFam" id="3.40.50.800:FF:000007">
    <property type="entry name" value="Histidine--tRNA ligase"/>
    <property type="match status" value="1"/>
</dbReference>
<dbReference type="Gene3D" id="3.40.50.800">
    <property type="entry name" value="Anticodon-binding domain"/>
    <property type="match status" value="1"/>
</dbReference>
<dbReference type="Gene3D" id="3.30.930.10">
    <property type="entry name" value="Bira Bifunctional Protein, Domain 2"/>
    <property type="match status" value="1"/>
</dbReference>
<dbReference type="HAMAP" id="MF_00127">
    <property type="entry name" value="His_tRNA_synth"/>
    <property type="match status" value="1"/>
</dbReference>
<dbReference type="InterPro" id="IPR006195">
    <property type="entry name" value="aa-tRNA-synth_II"/>
</dbReference>
<dbReference type="InterPro" id="IPR045864">
    <property type="entry name" value="aa-tRNA-synth_II/BPL/LPL"/>
</dbReference>
<dbReference type="InterPro" id="IPR004154">
    <property type="entry name" value="Anticodon-bd"/>
</dbReference>
<dbReference type="InterPro" id="IPR036621">
    <property type="entry name" value="Anticodon-bd_dom_sf"/>
</dbReference>
<dbReference type="InterPro" id="IPR015807">
    <property type="entry name" value="His-tRNA-ligase"/>
</dbReference>
<dbReference type="InterPro" id="IPR041715">
    <property type="entry name" value="HisRS-like_core"/>
</dbReference>
<dbReference type="InterPro" id="IPR004516">
    <property type="entry name" value="HisRS/HisZ"/>
</dbReference>
<dbReference type="InterPro" id="IPR033656">
    <property type="entry name" value="HisRS_anticodon"/>
</dbReference>
<dbReference type="NCBIfam" id="TIGR00442">
    <property type="entry name" value="hisS"/>
    <property type="match status" value="1"/>
</dbReference>
<dbReference type="PANTHER" id="PTHR43707:SF1">
    <property type="entry name" value="HISTIDINE--TRNA LIGASE, MITOCHONDRIAL-RELATED"/>
    <property type="match status" value="1"/>
</dbReference>
<dbReference type="PANTHER" id="PTHR43707">
    <property type="entry name" value="HISTIDYL-TRNA SYNTHETASE"/>
    <property type="match status" value="1"/>
</dbReference>
<dbReference type="Pfam" id="PF03129">
    <property type="entry name" value="HGTP_anticodon"/>
    <property type="match status" value="1"/>
</dbReference>
<dbReference type="Pfam" id="PF13393">
    <property type="entry name" value="tRNA-synt_His"/>
    <property type="match status" value="1"/>
</dbReference>
<dbReference type="PIRSF" id="PIRSF001549">
    <property type="entry name" value="His-tRNA_synth"/>
    <property type="match status" value="1"/>
</dbReference>
<dbReference type="SUPFAM" id="SSF52954">
    <property type="entry name" value="Class II aaRS ABD-related"/>
    <property type="match status" value="1"/>
</dbReference>
<dbReference type="SUPFAM" id="SSF55681">
    <property type="entry name" value="Class II aaRS and biotin synthetases"/>
    <property type="match status" value="1"/>
</dbReference>
<dbReference type="PROSITE" id="PS50862">
    <property type="entry name" value="AA_TRNA_LIGASE_II"/>
    <property type="match status" value="1"/>
</dbReference>
<proteinExistence type="inferred from homology"/>
<evidence type="ECO:0000255" key="1">
    <source>
        <dbReference type="HAMAP-Rule" id="MF_00127"/>
    </source>
</evidence>
<name>SYH_ERWT9</name>
<comment type="catalytic activity">
    <reaction evidence="1">
        <text>tRNA(His) + L-histidine + ATP = L-histidyl-tRNA(His) + AMP + diphosphate + H(+)</text>
        <dbReference type="Rhea" id="RHEA:17313"/>
        <dbReference type="Rhea" id="RHEA-COMP:9665"/>
        <dbReference type="Rhea" id="RHEA-COMP:9689"/>
        <dbReference type="ChEBI" id="CHEBI:15378"/>
        <dbReference type="ChEBI" id="CHEBI:30616"/>
        <dbReference type="ChEBI" id="CHEBI:33019"/>
        <dbReference type="ChEBI" id="CHEBI:57595"/>
        <dbReference type="ChEBI" id="CHEBI:78442"/>
        <dbReference type="ChEBI" id="CHEBI:78527"/>
        <dbReference type="ChEBI" id="CHEBI:456215"/>
        <dbReference type="EC" id="6.1.1.21"/>
    </reaction>
</comment>
<comment type="subunit">
    <text evidence="1">Homodimer.</text>
</comment>
<comment type="subcellular location">
    <subcellularLocation>
        <location evidence="1">Cytoplasm</location>
    </subcellularLocation>
</comment>
<comment type="similarity">
    <text evidence="1">Belongs to the class-II aminoacyl-tRNA synthetase family.</text>
</comment>